<reference key="1">
    <citation type="journal article" date="2002" name="Nucleic Acids Res.">
        <title>Genome sequence of Shigella flexneri 2a: insights into pathogenicity through comparison with genomes of Escherichia coli K12 and O157.</title>
        <authorList>
            <person name="Jin Q."/>
            <person name="Yuan Z."/>
            <person name="Xu J."/>
            <person name="Wang Y."/>
            <person name="Shen Y."/>
            <person name="Lu W."/>
            <person name="Wang J."/>
            <person name="Liu H."/>
            <person name="Yang J."/>
            <person name="Yang F."/>
            <person name="Zhang X."/>
            <person name="Zhang J."/>
            <person name="Yang G."/>
            <person name="Wu H."/>
            <person name="Qu D."/>
            <person name="Dong J."/>
            <person name="Sun L."/>
            <person name="Xue Y."/>
            <person name="Zhao A."/>
            <person name="Gao Y."/>
            <person name="Zhu J."/>
            <person name="Kan B."/>
            <person name="Ding K."/>
            <person name="Chen S."/>
            <person name="Cheng H."/>
            <person name="Yao Z."/>
            <person name="He B."/>
            <person name="Chen R."/>
            <person name="Ma D."/>
            <person name="Qiang B."/>
            <person name="Wen Y."/>
            <person name="Hou Y."/>
            <person name="Yu J."/>
        </authorList>
    </citation>
    <scope>NUCLEOTIDE SEQUENCE [LARGE SCALE GENOMIC DNA]</scope>
    <source>
        <strain>301 / Serotype 2a</strain>
    </source>
</reference>
<reference key="2">
    <citation type="journal article" date="2003" name="Infect. Immun.">
        <title>Complete genome sequence and comparative genomics of Shigella flexneri serotype 2a strain 2457T.</title>
        <authorList>
            <person name="Wei J."/>
            <person name="Goldberg M.B."/>
            <person name="Burland V."/>
            <person name="Venkatesan M.M."/>
            <person name="Deng W."/>
            <person name="Fournier G."/>
            <person name="Mayhew G.F."/>
            <person name="Plunkett G. III"/>
            <person name="Rose D.J."/>
            <person name="Darling A."/>
            <person name="Mau B."/>
            <person name="Perna N.T."/>
            <person name="Payne S.M."/>
            <person name="Runyen-Janecky L.J."/>
            <person name="Zhou S."/>
            <person name="Schwartz D.C."/>
            <person name="Blattner F.R."/>
        </authorList>
    </citation>
    <scope>NUCLEOTIDE SEQUENCE [LARGE SCALE GENOMIC DNA]</scope>
    <source>
        <strain>ATCC 700930 / 2457T / Serotype 2a</strain>
    </source>
</reference>
<accession>P0A9S9</accession>
<accession>P22730</accession>
<feature type="chain" id="PRO_0000092410" description="High-affinity branched-chain amino acid transport ATP-binding protein LivG">
    <location>
        <begin position="1"/>
        <end position="255"/>
    </location>
</feature>
<feature type="domain" description="ABC transporter" evidence="2">
    <location>
        <begin position="6"/>
        <end position="254"/>
    </location>
</feature>
<feature type="binding site" evidence="2">
    <location>
        <begin position="38"/>
        <end position="45"/>
    </location>
    <ligand>
        <name>ATP</name>
        <dbReference type="ChEBI" id="CHEBI:30616"/>
    </ligand>
</feature>
<protein>
    <recommendedName>
        <fullName>High-affinity branched-chain amino acid transport ATP-binding protein LivG</fullName>
    </recommendedName>
    <alternativeName>
        <fullName>LIV-I protein G</fullName>
    </alternativeName>
</protein>
<organism>
    <name type="scientific">Shigella flexneri</name>
    <dbReference type="NCBI Taxonomy" id="623"/>
    <lineage>
        <taxon>Bacteria</taxon>
        <taxon>Pseudomonadati</taxon>
        <taxon>Pseudomonadota</taxon>
        <taxon>Gammaproteobacteria</taxon>
        <taxon>Enterobacterales</taxon>
        <taxon>Enterobacteriaceae</taxon>
        <taxon>Shigella</taxon>
    </lineage>
</organism>
<keyword id="KW-0029">Amino-acid transport</keyword>
<keyword id="KW-0067">ATP-binding</keyword>
<keyword id="KW-0547">Nucleotide-binding</keyword>
<keyword id="KW-1185">Reference proteome</keyword>
<keyword id="KW-0813">Transport</keyword>
<dbReference type="EMBL" id="AE005674">
    <property type="protein sequence ID" value="AAN44932.1"/>
    <property type="molecule type" value="Genomic_DNA"/>
</dbReference>
<dbReference type="EMBL" id="AE014073">
    <property type="protein sequence ID" value="AAP19250.1"/>
    <property type="molecule type" value="Genomic_DNA"/>
</dbReference>
<dbReference type="RefSeq" id="NP_709225.1">
    <property type="nucleotide sequence ID" value="NC_004337.2"/>
</dbReference>
<dbReference type="RefSeq" id="WP_000082101.1">
    <property type="nucleotide sequence ID" value="NZ_WPGW01000010.1"/>
</dbReference>
<dbReference type="SMR" id="P0A9S9"/>
<dbReference type="STRING" id="198214.SF3473"/>
<dbReference type="PaxDb" id="198214-SF3473"/>
<dbReference type="GeneID" id="1026443"/>
<dbReference type="GeneID" id="89518287"/>
<dbReference type="KEGG" id="sfl:SF3473"/>
<dbReference type="KEGG" id="sfx:S4290"/>
<dbReference type="PATRIC" id="fig|198214.7.peg.4093"/>
<dbReference type="HOGENOM" id="CLU_000604_1_2_6"/>
<dbReference type="Proteomes" id="UP000001006">
    <property type="component" value="Chromosome"/>
</dbReference>
<dbReference type="Proteomes" id="UP000002673">
    <property type="component" value="Chromosome"/>
</dbReference>
<dbReference type="GO" id="GO:0005886">
    <property type="term" value="C:plasma membrane"/>
    <property type="evidence" value="ECO:0007669"/>
    <property type="project" value="TreeGrafter"/>
</dbReference>
<dbReference type="GO" id="GO:0005524">
    <property type="term" value="F:ATP binding"/>
    <property type="evidence" value="ECO:0007669"/>
    <property type="project" value="UniProtKB-KW"/>
</dbReference>
<dbReference type="GO" id="GO:0016887">
    <property type="term" value="F:ATP hydrolysis activity"/>
    <property type="evidence" value="ECO:0007669"/>
    <property type="project" value="InterPro"/>
</dbReference>
<dbReference type="GO" id="GO:0015188">
    <property type="term" value="F:L-isoleucine transmembrane transporter activity"/>
    <property type="evidence" value="ECO:0007669"/>
    <property type="project" value="TreeGrafter"/>
</dbReference>
<dbReference type="GO" id="GO:0015192">
    <property type="term" value="F:L-phenylalanine transmembrane transporter activity"/>
    <property type="evidence" value="ECO:0007669"/>
    <property type="project" value="TreeGrafter"/>
</dbReference>
<dbReference type="GO" id="GO:0005304">
    <property type="term" value="F:L-valine transmembrane transporter activity"/>
    <property type="evidence" value="ECO:0007669"/>
    <property type="project" value="TreeGrafter"/>
</dbReference>
<dbReference type="GO" id="GO:0042941">
    <property type="term" value="P:D-alanine transmembrane transport"/>
    <property type="evidence" value="ECO:0007669"/>
    <property type="project" value="TreeGrafter"/>
</dbReference>
<dbReference type="GO" id="GO:0015808">
    <property type="term" value="P:L-alanine transport"/>
    <property type="evidence" value="ECO:0007669"/>
    <property type="project" value="TreeGrafter"/>
</dbReference>
<dbReference type="GO" id="GO:1903806">
    <property type="term" value="P:L-isoleucine import across plasma membrane"/>
    <property type="evidence" value="ECO:0007669"/>
    <property type="project" value="TreeGrafter"/>
</dbReference>
<dbReference type="GO" id="GO:1903805">
    <property type="term" value="P:L-valine import across plasma membrane"/>
    <property type="evidence" value="ECO:0007669"/>
    <property type="project" value="TreeGrafter"/>
</dbReference>
<dbReference type="CDD" id="cd03219">
    <property type="entry name" value="ABC_Mj1267_LivG_branched"/>
    <property type="match status" value="1"/>
</dbReference>
<dbReference type="FunFam" id="3.40.50.300:FF:000317">
    <property type="entry name" value="Amino acid ABC transporter ATP-binding protein"/>
    <property type="match status" value="1"/>
</dbReference>
<dbReference type="Gene3D" id="3.40.50.300">
    <property type="entry name" value="P-loop containing nucleotide triphosphate hydrolases"/>
    <property type="match status" value="1"/>
</dbReference>
<dbReference type="InterPro" id="IPR003593">
    <property type="entry name" value="AAA+_ATPase"/>
</dbReference>
<dbReference type="InterPro" id="IPR051120">
    <property type="entry name" value="ABC_AA/LPS_Transport"/>
</dbReference>
<dbReference type="InterPro" id="IPR003439">
    <property type="entry name" value="ABC_transporter-like_ATP-bd"/>
</dbReference>
<dbReference type="InterPro" id="IPR017871">
    <property type="entry name" value="ABC_transporter-like_CS"/>
</dbReference>
<dbReference type="InterPro" id="IPR032823">
    <property type="entry name" value="BCA_ABC_TP_C"/>
</dbReference>
<dbReference type="InterPro" id="IPR027417">
    <property type="entry name" value="P-loop_NTPase"/>
</dbReference>
<dbReference type="NCBIfam" id="NF008449">
    <property type="entry name" value="PRK11300.1"/>
    <property type="match status" value="1"/>
</dbReference>
<dbReference type="PANTHER" id="PTHR45772">
    <property type="entry name" value="CONSERVED COMPONENT OF ABC TRANSPORTER FOR NATURAL AMINO ACIDS-RELATED"/>
    <property type="match status" value="1"/>
</dbReference>
<dbReference type="PANTHER" id="PTHR45772:SF11">
    <property type="entry name" value="HIGH-AFFINITY BRANCHED-CHAIN AMINO ACID TRANSPORT ATP-BINDING PROTEIN LIVG"/>
    <property type="match status" value="1"/>
</dbReference>
<dbReference type="Pfam" id="PF00005">
    <property type="entry name" value="ABC_tran"/>
    <property type="match status" value="1"/>
</dbReference>
<dbReference type="Pfam" id="PF12399">
    <property type="entry name" value="BCA_ABC_TP_C"/>
    <property type="match status" value="1"/>
</dbReference>
<dbReference type="SMART" id="SM00382">
    <property type="entry name" value="AAA"/>
    <property type="match status" value="1"/>
</dbReference>
<dbReference type="SUPFAM" id="SSF52540">
    <property type="entry name" value="P-loop containing nucleoside triphosphate hydrolases"/>
    <property type="match status" value="1"/>
</dbReference>
<dbReference type="PROSITE" id="PS00211">
    <property type="entry name" value="ABC_TRANSPORTER_1"/>
    <property type="match status" value="1"/>
</dbReference>
<dbReference type="PROSITE" id="PS50893">
    <property type="entry name" value="ABC_TRANSPORTER_2"/>
    <property type="match status" value="1"/>
</dbReference>
<proteinExistence type="inferred from homology"/>
<sequence>MSQPLLSVNGLMMRFGGLLAVNNVNLELYPQEIVSLIGPNGAGKTTVFNCLTGFYKPTGGTILLRDQHLEGLPGQQIARMGVVRTFQHVRLFREMTVIENLLVAQHQQLKTGLFSGLLKTPSFRRAQSEALDRAATWLERIGLLEHANRQASNLAYGDQRRLEIARCMVTQPEILMLDEPAAGLNPKETKELDELIAELRNHHNTTILLIEHDMKLVMGISDRIYVVNQGTPLANGTPEQIRNNPDVIRAYLGEA</sequence>
<evidence type="ECO:0000250" key="1"/>
<evidence type="ECO:0000255" key="2">
    <source>
        <dbReference type="PROSITE-ProRule" id="PRU00434"/>
    </source>
</evidence>
<evidence type="ECO:0000305" key="3"/>
<name>LIVG_SHIFL</name>
<gene>
    <name type="primary">livG</name>
    <name type="ordered locus">SF3473</name>
    <name type="ordered locus">S4290</name>
</gene>
<comment type="function">
    <text evidence="1">Component of the leucine-specific transport system.</text>
</comment>
<comment type="similarity">
    <text evidence="3">Belongs to the ABC transporter superfamily.</text>
</comment>